<evidence type="ECO:0000250" key="1"/>
<evidence type="ECO:0000255" key="2">
    <source>
        <dbReference type="HAMAP-Rule" id="MF_01163"/>
    </source>
</evidence>
<organism>
    <name type="scientific">Methanosarcina barkeri (strain Fusaro / DSM 804)</name>
    <dbReference type="NCBI Taxonomy" id="269797"/>
    <lineage>
        <taxon>Archaea</taxon>
        <taxon>Methanobacteriati</taxon>
        <taxon>Methanobacteriota</taxon>
        <taxon>Stenosarchaea group</taxon>
        <taxon>Methanomicrobia</taxon>
        <taxon>Methanosarcinales</taxon>
        <taxon>Methanosarcinaceae</taxon>
        <taxon>Methanosarcina</taxon>
    </lineage>
</organism>
<sequence length="356" mass="39936">MITKQQVLEFLKNYDLENITIATICSHSSLQIFDGARKEGFRTLGICVGKPPKFYEAFPKAKPDEYLVVDSYADIMNKAEELRQKNTIIIPHGSVVAYLGTENFADMAVPTFGNRAVLEWESDRDKEREWLLGAGIHMPGKVDDPHDINGPVMVKYDGAKGGKGFFVAKTYEEFEELIDRTQKYTIQEFITGTRYYLHYFYSPIRNEGYTLSKGSLELLSMDRRVESNADEIFRLGSPRELVGAGIRPTYVVTGNMPLVARESLLPLIFSLGERVVEESLGLFGGMIGSFCLETVFTDTLEIKVFEISARIVAGTNLYISGSPYADLMEENLSTGRRIAREIKIAAQTGQLDKIIS</sequence>
<keyword id="KW-0067">ATP-binding</keyword>
<keyword id="KW-0436">Ligase</keyword>
<keyword id="KW-0460">Magnesium</keyword>
<keyword id="KW-0464">Manganese</keyword>
<keyword id="KW-0479">Metal-binding</keyword>
<keyword id="KW-0547">Nucleotide-binding</keyword>
<keyword id="KW-0658">Purine biosynthesis</keyword>
<name>PURP_METBF</name>
<accession>Q46CU6</accession>
<gene>
    <name evidence="2" type="primary">purP</name>
    <name type="ordered locus">Mbar_A1334</name>
</gene>
<proteinExistence type="inferred from homology"/>
<comment type="function">
    <text evidence="2">Catalyzes the ATP- and formate-dependent formylation of 5-aminoimidazole-4-carboxamide-1-beta-d-ribofuranosyl 5'-monophosphate (AICAR) to 5-formaminoimidazole-4-carboxamide-1-beta-d-ribofuranosyl 5'-monophosphate (FAICAR) in the absence of folates.</text>
</comment>
<comment type="catalytic activity">
    <reaction evidence="2">
        <text>5-amino-1-(5-phospho-beta-D-ribosyl)imidazole-4-carboxamide + formate + ATP = 5-formamido-1-(5-phospho-D-ribosyl)imidazole-4-carboxamide + ADP + phosphate</text>
        <dbReference type="Rhea" id="RHEA:24836"/>
        <dbReference type="ChEBI" id="CHEBI:15740"/>
        <dbReference type="ChEBI" id="CHEBI:30616"/>
        <dbReference type="ChEBI" id="CHEBI:43474"/>
        <dbReference type="ChEBI" id="CHEBI:58467"/>
        <dbReference type="ChEBI" id="CHEBI:58475"/>
        <dbReference type="ChEBI" id="CHEBI:456216"/>
        <dbReference type="EC" id="6.3.4.23"/>
    </reaction>
</comment>
<comment type="cofactor">
    <cofactor evidence="1">
        <name>Mg(2+)</name>
        <dbReference type="ChEBI" id="CHEBI:18420"/>
    </cofactor>
    <cofactor evidence="1">
        <name>Mn(2+)</name>
        <dbReference type="ChEBI" id="CHEBI:29035"/>
    </cofactor>
    <text evidence="1">Binds 1 Mg(2+) or Mn(2+) ion per subunit.</text>
</comment>
<comment type="pathway">
    <text evidence="2">Purine metabolism; IMP biosynthesis via de novo pathway; 5-formamido-1-(5-phospho-D-ribosyl)imidazole-4-carboxamide from 5-amino-1-(5-phospho-D-ribosyl)imidazole-4-carboxamide (formate route): step 1/1.</text>
</comment>
<comment type="similarity">
    <text evidence="2">Belongs to the phosphohexose mutase family.</text>
</comment>
<feature type="chain" id="PRO_0000348626" description="5-formaminoimidazole-4-carboxamide-1-(beta)-D-ribofuranosyl 5'-monophosphate synthetase">
    <location>
        <begin position="1"/>
        <end position="356"/>
    </location>
</feature>
<feature type="domain" description="ATP-grasp" evidence="2">
    <location>
        <begin position="101"/>
        <end position="333"/>
    </location>
</feature>
<feature type="binding site" evidence="2">
    <location>
        <position position="27"/>
    </location>
    <ligand>
        <name>5-amino-1-(5-phospho-beta-D-ribosyl)imidazole-4-carboxamide</name>
        <dbReference type="ChEBI" id="CHEBI:58475"/>
    </ligand>
</feature>
<feature type="binding site" evidence="2">
    <location>
        <position position="94"/>
    </location>
    <ligand>
        <name>5-amino-1-(5-phospho-beta-D-ribosyl)imidazole-4-carboxamide</name>
        <dbReference type="ChEBI" id="CHEBI:58475"/>
    </ligand>
</feature>
<feature type="binding site" evidence="2">
    <location>
        <begin position="145"/>
        <end position="196"/>
    </location>
    <ligand>
        <name>ATP</name>
        <dbReference type="ChEBI" id="CHEBI:30616"/>
    </ligand>
</feature>
<feature type="binding site" evidence="2">
    <location>
        <position position="226"/>
    </location>
    <ligand>
        <name>ATP</name>
        <dbReference type="ChEBI" id="CHEBI:30616"/>
    </ligand>
</feature>
<feature type="binding site" evidence="2">
    <location>
        <position position="255"/>
    </location>
    <ligand>
        <name>5-amino-1-(5-phospho-beta-D-ribosyl)imidazole-4-carboxamide</name>
        <dbReference type="ChEBI" id="CHEBI:58475"/>
    </ligand>
</feature>
<feature type="binding site" evidence="2">
    <location>
        <position position="293"/>
    </location>
    <ligand>
        <name>Mg(2+)</name>
        <dbReference type="ChEBI" id="CHEBI:18420"/>
    </ligand>
</feature>
<feature type="binding site" evidence="2">
    <location>
        <position position="306"/>
    </location>
    <ligand>
        <name>Mg(2+)</name>
        <dbReference type="ChEBI" id="CHEBI:18420"/>
    </ligand>
</feature>
<dbReference type="EC" id="6.3.4.23" evidence="2"/>
<dbReference type="EMBL" id="CP000099">
    <property type="protein sequence ID" value="AAZ70296.1"/>
    <property type="molecule type" value="Genomic_DNA"/>
</dbReference>
<dbReference type="SMR" id="Q46CU6"/>
<dbReference type="STRING" id="269797.Mbar_A1334"/>
<dbReference type="PaxDb" id="269797-Mbar_A1334"/>
<dbReference type="KEGG" id="mba:Mbar_A1334"/>
<dbReference type="eggNOG" id="arCOG04346">
    <property type="taxonomic scope" value="Archaea"/>
</dbReference>
<dbReference type="HOGENOM" id="CLU_065084_0_0_2"/>
<dbReference type="OrthoDB" id="98133at2157"/>
<dbReference type="UniPathway" id="UPA00074">
    <property type="reaction ID" value="UER00134"/>
</dbReference>
<dbReference type="GO" id="GO:0005524">
    <property type="term" value="F:ATP binding"/>
    <property type="evidence" value="ECO:0007669"/>
    <property type="project" value="UniProtKB-KW"/>
</dbReference>
<dbReference type="GO" id="GO:0016879">
    <property type="term" value="F:ligase activity, forming carbon-nitrogen bonds"/>
    <property type="evidence" value="ECO:0007669"/>
    <property type="project" value="UniProtKB-UniRule"/>
</dbReference>
<dbReference type="GO" id="GO:0000287">
    <property type="term" value="F:magnesium ion binding"/>
    <property type="evidence" value="ECO:0007669"/>
    <property type="project" value="InterPro"/>
</dbReference>
<dbReference type="GO" id="GO:0006189">
    <property type="term" value="P:'de novo' IMP biosynthetic process"/>
    <property type="evidence" value="ECO:0007669"/>
    <property type="project" value="UniProtKB-UniRule"/>
</dbReference>
<dbReference type="Gene3D" id="3.40.50.20">
    <property type="match status" value="1"/>
</dbReference>
<dbReference type="Gene3D" id="3.30.1490.20">
    <property type="entry name" value="ATP-grasp fold, A domain"/>
    <property type="match status" value="1"/>
</dbReference>
<dbReference type="Gene3D" id="3.30.470.20">
    <property type="entry name" value="ATP-grasp fold, B domain"/>
    <property type="match status" value="1"/>
</dbReference>
<dbReference type="HAMAP" id="MF_01163">
    <property type="entry name" value="IMP_biosynth_PurP"/>
    <property type="match status" value="1"/>
</dbReference>
<dbReference type="InterPro" id="IPR011761">
    <property type="entry name" value="ATP-grasp"/>
</dbReference>
<dbReference type="InterPro" id="IPR013815">
    <property type="entry name" value="ATP_grasp_subdomain_1"/>
</dbReference>
<dbReference type="InterPro" id="IPR023656">
    <property type="entry name" value="IMP_biosynth_PurP"/>
</dbReference>
<dbReference type="InterPro" id="IPR009720">
    <property type="entry name" value="IMP_biosynth_PurP_C"/>
</dbReference>
<dbReference type="InterPro" id="IPR010672">
    <property type="entry name" value="IMP_biosynth_PurP_N"/>
</dbReference>
<dbReference type="InterPro" id="IPR016185">
    <property type="entry name" value="PreATP-grasp_dom_sf"/>
</dbReference>
<dbReference type="NCBIfam" id="NF009781">
    <property type="entry name" value="PRK13278.1-6"/>
    <property type="match status" value="1"/>
</dbReference>
<dbReference type="PANTHER" id="PTHR38147:SF2">
    <property type="entry name" value="5-FORMAMINOIMIDAZOLE-4-CARBOXAMIDE-1-(BETA)-D-RIBOFURANOSYL 5'-MONOPHOSPHATE SYNTHETASE"/>
    <property type="match status" value="1"/>
</dbReference>
<dbReference type="PANTHER" id="PTHR38147">
    <property type="entry name" value="5-FORMAMINOIMIDAZOLE-4-CARBOXAMIDE-1-(BETA)-D-RIBOFURANOSYL 5'-MONOPHOSPHATE SYNTHETASE-RELATED"/>
    <property type="match status" value="1"/>
</dbReference>
<dbReference type="Pfam" id="PF06849">
    <property type="entry name" value="DUF1246"/>
    <property type="match status" value="1"/>
</dbReference>
<dbReference type="Pfam" id="PF06973">
    <property type="entry name" value="DUF1297"/>
    <property type="match status" value="1"/>
</dbReference>
<dbReference type="PIRSF" id="PIRSF004602">
    <property type="entry name" value="ATPgrasp_PurP"/>
    <property type="match status" value="1"/>
</dbReference>
<dbReference type="SUPFAM" id="SSF56059">
    <property type="entry name" value="Glutathione synthetase ATP-binding domain-like"/>
    <property type="match status" value="1"/>
</dbReference>
<dbReference type="SUPFAM" id="SSF52440">
    <property type="entry name" value="PreATP-grasp domain"/>
    <property type="match status" value="1"/>
</dbReference>
<dbReference type="PROSITE" id="PS50975">
    <property type="entry name" value="ATP_GRASP"/>
    <property type="match status" value="1"/>
</dbReference>
<protein>
    <recommendedName>
        <fullName evidence="2">5-formaminoimidazole-4-carboxamide-1-(beta)-D-ribofuranosyl 5'-monophosphate synthetase</fullName>
        <ecNumber evidence="2">6.3.4.23</ecNumber>
    </recommendedName>
    <alternativeName>
        <fullName evidence="2">5-aminoimidazole-4-carboxamide-1-beta-D-ribofuranosyl 5'-monophosphate--formate ligase</fullName>
    </alternativeName>
</protein>
<reference key="1">
    <citation type="journal article" date="2006" name="J. Bacteriol.">
        <title>The Methanosarcina barkeri genome: comparative analysis with Methanosarcina acetivorans and Methanosarcina mazei reveals extensive rearrangement within methanosarcinal genomes.</title>
        <authorList>
            <person name="Maeder D.L."/>
            <person name="Anderson I."/>
            <person name="Brettin T.S."/>
            <person name="Bruce D.C."/>
            <person name="Gilna P."/>
            <person name="Han C.S."/>
            <person name="Lapidus A."/>
            <person name="Metcalf W.W."/>
            <person name="Saunders E."/>
            <person name="Tapia R."/>
            <person name="Sowers K.R."/>
        </authorList>
    </citation>
    <scope>NUCLEOTIDE SEQUENCE [LARGE SCALE GENOMIC DNA]</scope>
    <source>
        <strain>Fusaro / DSM 804</strain>
    </source>
</reference>